<dbReference type="EMBL" id="AL731548">
    <property type="status" value="NOT_ANNOTATED_CDS"/>
    <property type="molecule type" value="Genomic_DNA"/>
</dbReference>
<dbReference type="EMBL" id="AK220382">
    <property type="protein sequence ID" value="BAD90439.1"/>
    <property type="molecule type" value="mRNA"/>
</dbReference>
<dbReference type="EMBL" id="BN000782">
    <property type="protein sequence ID" value="CAI99162.1"/>
    <property type="molecule type" value="Genomic_DNA"/>
</dbReference>
<dbReference type="CCDS" id="CCDS72442.1">
    <molecule id="Q32KG4-2"/>
</dbReference>
<dbReference type="RefSeq" id="NP_001035524.2">
    <molecule id="Q32KG4-2"/>
    <property type="nucleotide sequence ID" value="NM_001040434.2"/>
</dbReference>
<dbReference type="RefSeq" id="XP_011246109.1">
    <molecule id="Q32KG4-2"/>
    <property type="nucleotide sequence ID" value="XM_011247807.3"/>
</dbReference>
<dbReference type="RefSeq" id="XP_011246110.1">
    <molecule id="Q32KG4-2"/>
    <property type="nucleotide sequence ID" value="XM_011247808.3"/>
</dbReference>
<dbReference type="SMR" id="Q32KG4"/>
<dbReference type="BioGRID" id="229088">
    <property type="interactions" value="9"/>
</dbReference>
<dbReference type="STRING" id="10090.ENSMUSP00000128287"/>
<dbReference type="iPTMnet" id="Q32KG4"/>
<dbReference type="PhosphoSitePlus" id="Q32KG4"/>
<dbReference type="PaxDb" id="10090-ENSMUSP00000128287"/>
<dbReference type="ProteomicsDB" id="256801">
    <molecule id="Q32KG4-1"/>
</dbReference>
<dbReference type="ProteomicsDB" id="256802">
    <molecule id="Q32KG4-2"/>
</dbReference>
<dbReference type="Pumba" id="Q32KG4"/>
<dbReference type="Antibodypedia" id="29499">
    <property type="antibodies" value="58 antibodies from 19 providers"/>
</dbReference>
<dbReference type="Ensembl" id="ENSMUST00000165829.4">
    <molecule id="Q32KG4-2"/>
    <property type="protein sequence ID" value="ENSMUSP00000128287.2"/>
    <property type="gene ID" value="ENSMUSG00000085584.5"/>
</dbReference>
<dbReference type="GeneID" id="209540"/>
<dbReference type="KEGG" id="mmu:209540"/>
<dbReference type="UCSC" id="uc009umd.3">
    <molecule id="Q32KG4-2"/>
    <property type="organism name" value="mouse"/>
</dbReference>
<dbReference type="AGR" id="MGI:2685231"/>
<dbReference type="CTD" id="57529"/>
<dbReference type="MGI" id="MGI:2685231">
    <property type="gene designation" value="Rtl9"/>
</dbReference>
<dbReference type="VEuPathDB" id="HostDB:ENSMUSG00000085584"/>
<dbReference type="eggNOG" id="ENOG502RXMW">
    <property type="taxonomic scope" value="Eukaryota"/>
</dbReference>
<dbReference type="GeneTree" id="ENSGT00730000110943"/>
<dbReference type="HOGENOM" id="CLU_005669_0_0_1"/>
<dbReference type="InParanoid" id="Q32KG4"/>
<dbReference type="OMA" id="LMPDINP"/>
<dbReference type="OrthoDB" id="81108at9989"/>
<dbReference type="TreeFam" id="TF334822"/>
<dbReference type="BioGRID-ORCS" id="209540">
    <property type="hits" value="0 hits in 72 CRISPR screens"/>
</dbReference>
<dbReference type="PRO" id="PR:Q32KG4"/>
<dbReference type="Proteomes" id="UP000000589">
    <property type="component" value="Chromosome X"/>
</dbReference>
<dbReference type="RNAct" id="Q32KG4">
    <property type="molecule type" value="protein"/>
</dbReference>
<dbReference type="Bgee" id="ENSMUSG00000085584">
    <property type="expression patterns" value="Expressed in mesodermal cell in embryo and 23 other cell types or tissues"/>
</dbReference>
<dbReference type="InterPro" id="IPR042919">
    <property type="entry name" value="RTL9"/>
</dbReference>
<dbReference type="PANTHER" id="PTHR47702">
    <property type="entry name" value="RETROTRANSPOSON GAG-LIKE PROTEIN 9"/>
    <property type="match status" value="1"/>
</dbReference>
<dbReference type="PANTHER" id="PTHR47702:SF1">
    <property type="entry name" value="RETROTRANSPOSON GAG-LIKE PROTEIN 9"/>
    <property type="match status" value="1"/>
</dbReference>
<reference key="1">
    <citation type="journal article" date="2009" name="PLoS Biol.">
        <title>Lineage-specific biology revealed by a finished genome assembly of the mouse.</title>
        <authorList>
            <person name="Church D.M."/>
            <person name="Goodstadt L."/>
            <person name="Hillier L.W."/>
            <person name="Zody M.C."/>
            <person name="Goldstein S."/>
            <person name="She X."/>
            <person name="Bult C.J."/>
            <person name="Agarwala R."/>
            <person name="Cherry J.L."/>
            <person name="DiCuccio M."/>
            <person name="Hlavina W."/>
            <person name="Kapustin Y."/>
            <person name="Meric P."/>
            <person name="Maglott D."/>
            <person name="Birtle Z."/>
            <person name="Marques A.C."/>
            <person name="Graves T."/>
            <person name="Zhou S."/>
            <person name="Teague B."/>
            <person name="Potamousis K."/>
            <person name="Churas C."/>
            <person name="Place M."/>
            <person name="Herschleb J."/>
            <person name="Runnheim R."/>
            <person name="Forrest D."/>
            <person name="Amos-Landgraf J."/>
            <person name="Schwartz D.C."/>
            <person name="Cheng Z."/>
            <person name="Lindblad-Toh K."/>
            <person name="Eichler E.E."/>
            <person name="Ponting C.P."/>
        </authorList>
    </citation>
    <scope>NUCLEOTIDE SEQUENCE [LARGE SCALE GENOMIC DNA]</scope>
    <source>
        <strain>C57BL/6J</strain>
    </source>
</reference>
<reference key="2">
    <citation type="submission" date="2005-02" db="EMBL/GenBank/DDBJ databases">
        <title>Prediction of the coding sequences of mouse homologues of KIAA gene. The complete nucleotide sequences of mouse KIAA-homologous cDNAs identified by screening of terminal sequences of cDNA clones randomly sampled from size-fractionated libraries.</title>
        <authorList>
            <person name="Okazaki N."/>
            <person name="Kikuno R.F."/>
            <person name="Ohara R."/>
            <person name="Inamoto S."/>
            <person name="Nagase T."/>
            <person name="Ohara O."/>
            <person name="Koga H."/>
        </authorList>
    </citation>
    <scope>NUCLEOTIDE SEQUENCE [LARGE SCALE MRNA] OF 211-1339 (ISOFORM 2)</scope>
    <source>
        <tissue>Brain</tissue>
    </source>
</reference>
<reference key="3">
    <citation type="journal article" date="2005" name="Cytogenet. Genome Res.">
        <title>A family of neofunctionalized Ty3/gypsy retrotransposon genes in mammalian genomes.</title>
        <authorList>
            <person name="Brandt J."/>
            <person name="Veith A.-M."/>
            <person name="Volff J.-N."/>
        </authorList>
    </citation>
    <scope>GENE FAMILY</scope>
</reference>
<reference key="4">
    <citation type="journal article" date="2005" name="J. Mol. Evol.">
        <title>A small family of sushi-class retrotransposon-derived genes in mammals and their relation to genomic imprinting.</title>
        <authorList>
            <person name="Youngson N.A."/>
            <person name="Kocialkowski S."/>
            <person name="Peel N."/>
            <person name="Ferguson-Smith A.C."/>
        </authorList>
    </citation>
    <scope>IDENTIFICATION OF ISOFORM 1</scope>
</reference>
<accession>Q32KG4</accession>
<accession>Q5DTY8</accession>
<feature type="chain" id="PRO_0000259628" description="Retrotransposon Gag-like protein 9">
    <location>
        <begin position="1"/>
        <end position="1339"/>
    </location>
</feature>
<feature type="region of interest" description="Disordered" evidence="2">
    <location>
        <begin position="533"/>
        <end position="555"/>
    </location>
</feature>
<feature type="region of interest" description="Disordered" evidence="2">
    <location>
        <begin position="679"/>
        <end position="711"/>
    </location>
</feature>
<feature type="region of interest" description="Disordered" evidence="2">
    <location>
        <begin position="845"/>
        <end position="864"/>
    </location>
</feature>
<feature type="region of interest" description="Disordered" evidence="2">
    <location>
        <begin position="880"/>
        <end position="901"/>
    </location>
</feature>
<feature type="region of interest" description="Disordered" evidence="2">
    <location>
        <begin position="982"/>
        <end position="1010"/>
    </location>
</feature>
<feature type="region of interest" description="Disordered" evidence="2">
    <location>
        <begin position="1078"/>
        <end position="1116"/>
    </location>
</feature>
<feature type="compositionally biased region" description="Polar residues" evidence="2">
    <location>
        <begin position="533"/>
        <end position="545"/>
    </location>
</feature>
<feature type="compositionally biased region" description="Polar residues" evidence="2">
    <location>
        <begin position="679"/>
        <end position="693"/>
    </location>
</feature>
<feature type="compositionally biased region" description="Polar residues" evidence="2">
    <location>
        <begin position="700"/>
        <end position="711"/>
    </location>
</feature>
<feature type="compositionally biased region" description="Low complexity" evidence="2">
    <location>
        <begin position="891"/>
        <end position="901"/>
    </location>
</feature>
<feature type="compositionally biased region" description="Polar residues" evidence="2">
    <location>
        <begin position="1078"/>
        <end position="1106"/>
    </location>
</feature>
<feature type="splice variant" id="VSP_021488" description="In isoform 2." evidence="4">
    <original>VIKGTYAHGF</original>
    <variation>HQHVPKRCYYLKEHGDPQESLHDHLRQSAGLPKAPTNK</variation>
    <location>
        <begin position="1330"/>
        <end position="1339"/>
    </location>
</feature>
<evidence type="ECO:0000250" key="1">
    <source>
        <dbReference type="UniProtKB" id="Q8NET4"/>
    </source>
</evidence>
<evidence type="ECO:0000256" key="2">
    <source>
        <dbReference type="SAM" id="MobiDB-lite"/>
    </source>
</evidence>
<evidence type="ECO:0000269" key="3">
    <source>
    </source>
</evidence>
<evidence type="ECO:0000303" key="4">
    <source ref="2"/>
</evidence>
<evidence type="ECO:0000305" key="5"/>
<evidence type="ECO:0000312" key="6">
    <source>
        <dbReference type="MGI" id="MGI:2685231"/>
    </source>
</evidence>
<name>RTL9_MOUSE</name>
<sequence>MADMSIPLHSLRFNNMMKEENGDPQNRGATFSRPMTETRAEVQILHSQLQLPVVSTSASDLEGTSTQLMTSPGFDSLSTPLMGAPHSGTLSPPLMSASDSGTLSPLLMPASDSGTLSPLLMPVSDSGTLSPLLMPASDSGTLSPLLSTSDYGLMSPGMMSIPDFGTMSSLMAAPDSAEISPLAMPIQSSGVISAPIMSTSSSEASLMLGSDPGEISPLLIPDMNPGVTSTPPMTAPGSEAMSPLQITDEDTEAMSKVLMTALASGEISSLLMSGTDSEAISSLIMSALASGETPAQPTNPPESEGIPTVLMSGSDSAVMSSLPMPVSGSGAMPTPLLSIPDAGEIATLPKPVPDVEAMSPLLMTALTSTVMPSQLISASSSGVMSPDTTQNINSEVMSAPPIRVSSTGLMSTLPVRASDTAATPIQLMRVPASGNMSTSQKTVPVSGSMSTPLMAVTSPGAIFTEQMPSTASGTMSTHLTMPQTPGTMPIGFMKSTSNGAVSAQQIRCSVSGMMSTQPVIATASEIMSVSQSTVPTSGSVSTQKTRAPVSGPMSTTQIRTTASALTSTPQMRATASGTMSIPLMTAKTSGSASTLLMRDTASGVISVPQMRAPGSGTVSKPLMTSKASGMFMQQMTTAAFGATPTSLMRDTASGGLSMPQMTDPASGGMSTLLTRATASGTKSTSQMTATTSGGIFMPQTRLSGPGATSTPLMRATASEKMPSQAMNIQDSGGVSTPLMRPVALGGVQMRSQGSGTMSTPLLRASDSSEMSMLLTKAPSSGERPLLLVRPPASGEIAPHSRTPVYGTISAPHMTTTASGVMTMSPMKTSVPVSESATLLRPTDSGVMSIPLTRTPASRAKSRPQMATACGDMCPLPVRAPATAGISPSPVRSPASSTLSTLLRRPSDGAVTAELERVLGPAQFAAMTPGEMSKPLMRASAPGTTTMPLMSPMTSGEMSMPLMKTTPSGTMSTLQTKVMSSRATSLPQPRNAASGVIANPPQRAPASGAGSTPLMRVSGSGMMSTPLLGATASGGMSMPQMAPPTSGDMFSPLMRSPAPGIMSTPQTAFGMTPTLNVKATDSGEASTSHTRFTAPGSKSTPHMTSTAPEMKTPPPKEVPSFGMLTPALCYLLEEQEAARGSSSVEEDAEEIDEEKQMKGFLDDSEKMAFLVSLHLGAAERWSILQMEVGNPISSDNKAFLRRSQGLYDSLSEIDILSAVLCHPKQGKKSVRQYATDFLLLARHLSWSDAILRTRFLEGLSEAVTTKMGRIFLKVAGSLKELIDRSLYTECQLAEEKDSSGNSNQVVPTSCKRNNEEAMENELGSQQQTEEVIKGTYAHGF</sequence>
<keyword id="KW-0025">Alternative splicing</keyword>
<keyword id="KW-1185">Reference proteome</keyword>
<gene>
    <name evidence="1" type="primary">Rtl9</name>
    <name type="synonym">Gm385</name>
    <name type="synonym">Kiaa1318</name>
    <name evidence="6" type="synonym">Rgag1</name>
</gene>
<protein>
    <recommendedName>
        <fullName evidence="1">Retrotransposon Gag-like protein 9</fullName>
    </recommendedName>
    <alternativeName>
        <fullName evidence="6">Retrotransposon gag domain-containing protein 1</fullName>
    </alternativeName>
    <alternativeName>
        <fullName evidence="5">Sushi-XF2</fullName>
    </alternativeName>
</protein>
<organism>
    <name type="scientific">Mus musculus</name>
    <name type="common">Mouse</name>
    <dbReference type="NCBI Taxonomy" id="10090"/>
    <lineage>
        <taxon>Eukaryota</taxon>
        <taxon>Metazoa</taxon>
        <taxon>Chordata</taxon>
        <taxon>Craniata</taxon>
        <taxon>Vertebrata</taxon>
        <taxon>Euteleostomi</taxon>
        <taxon>Mammalia</taxon>
        <taxon>Eutheria</taxon>
        <taxon>Euarchontoglires</taxon>
        <taxon>Glires</taxon>
        <taxon>Rodentia</taxon>
        <taxon>Myomorpha</taxon>
        <taxon>Muroidea</taxon>
        <taxon>Muridae</taxon>
        <taxon>Murinae</taxon>
        <taxon>Mus</taxon>
        <taxon>Mus</taxon>
    </lineage>
</organism>
<proteinExistence type="evidence at transcript level"/>
<comment type="alternative products">
    <event type="alternative splicing"/>
    <isoform>
        <id>Q32KG4-1</id>
        <name>1</name>
        <sequence type="displayed"/>
    </isoform>
    <isoform>
        <id>Q32KG4-2</id>
        <name>2</name>
        <sequence type="described" ref="VSP_021488"/>
    </isoform>
</comment>
<comment type="miscellaneous">
    <text evidence="3">RTL8C is one of at least 11 genes called Mar or Mart related to long terminal repeat retrotransposons. They do not correspond to functional retrotransposons, but rather to neofunctionalized retrotransposons genes.</text>
</comment>